<protein>
    <recommendedName>
        <fullName evidence="1">Nitrogenase iron protein</fullName>
        <ecNumber evidence="1">1.18.6.1</ecNumber>
    </recommendedName>
    <alternativeName>
        <fullName evidence="1">Nitrogenase Fe protein</fullName>
    </alternativeName>
    <alternativeName>
        <fullName evidence="1">Nitrogenase component II</fullName>
    </alternativeName>
    <alternativeName>
        <fullName evidence="1">Nitrogenase reductase</fullName>
    </alternativeName>
</protein>
<gene>
    <name evidence="1" type="primary">nifH</name>
    <name type="ordered locus">Cyan7425_2364</name>
</gene>
<organism>
    <name type="scientific">Cyanothece sp. (strain PCC 7425 / ATCC 29141)</name>
    <dbReference type="NCBI Taxonomy" id="395961"/>
    <lineage>
        <taxon>Bacteria</taxon>
        <taxon>Bacillati</taxon>
        <taxon>Cyanobacteriota</taxon>
        <taxon>Cyanophyceae</taxon>
        <taxon>Gomontiellales</taxon>
        <taxon>Cyanothecaceae</taxon>
        <taxon>Cyanothece</taxon>
    </lineage>
</organism>
<evidence type="ECO:0000255" key="1">
    <source>
        <dbReference type="HAMAP-Rule" id="MF_00533"/>
    </source>
</evidence>
<sequence length="298" mass="32673">MSDEKIRQIAFYGKGGIGKSTTSQNTIAAMAEMGQRIMIVGCDPKADSTRLMLHSKAQTTILHLAAERGAVEDLELEEVLLTGFRDVRCVESGGPEPGVGCAGRGIITAINFLEENGAYEDLDFVSYDVLGDVVCGGFAMPIREGKAQEIYIVTSGEMMAMYAANNIARGVLKYAHSGGVRLGGLICNSRKVDRELELIETLAKRLNTQMLHFVPRDNIVQHAELRRMTVNEYAPDSNQANEYRVLAQKIIDNKNLAIPTPITMDELEDLLVEFGILGGEEEYQKAISQDQGKQLTTV</sequence>
<name>NIFH_CYAP4</name>
<dbReference type="EC" id="1.18.6.1" evidence="1"/>
<dbReference type="EMBL" id="CP001344">
    <property type="protein sequence ID" value="ACL44722.1"/>
    <property type="molecule type" value="Genomic_DNA"/>
</dbReference>
<dbReference type="SMR" id="B8HWE3"/>
<dbReference type="STRING" id="395961.Cyan7425_2364"/>
<dbReference type="KEGG" id="cyn:Cyan7425_2364"/>
<dbReference type="eggNOG" id="COG1348">
    <property type="taxonomic scope" value="Bacteria"/>
</dbReference>
<dbReference type="HOGENOM" id="CLU_059373_0_0_3"/>
<dbReference type="OrthoDB" id="9778641at2"/>
<dbReference type="GO" id="GO:0051539">
    <property type="term" value="F:4 iron, 4 sulfur cluster binding"/>
    <property type="evidence" value="ECO:0007669"/>
    <property type="project" value="UniProtKB-KW"/>
</dbReference>
<dbReference type="GO" id="GO:0005524">
    <property type="term" value="F:ATP binding"/>
    <property type="evidence" value="ECO:0007669"/>
    <property type="project" value="UniProtKB-UniRule"/>
</dbReference>
<dbReference type="GO" id="GO:0046872">
    <property type="term" value="F:metal ion binding"/>
    <property type="evidence" value="ECO:0007669"/>
    <property type="project" value="UniProtKB-KW"/>
</dbReference>
<dbReference type="GO" id="GO:0016163">
    <property type="term" value="F:nitrogenase activity"/>
    <property type="evidence" value="ECO:0007669"/>
    <property type="project" value="UniProtKB-UniRule"/>
</dbReference>
<dbReference type="GO" id="GO:0009399">
    <property type="term" value="P:nitrogen fixation"/>
    <property type="evidence" value="ECO:0007669"/>
    <property type="project" value="UniProtKB-UniRule"/>
</dbReference>
<dbReference type="CDD" id="cd02040">
    <property type="entry name" value="NifH"/>
    <property type="match status" value="1"/>
</dbReference>
<dbReference type="FunFam" id="3.40.50.300:FF:001379">
    <property type="entry name" value="Nitrogenase iron protein 1"/>
    <property type="match status" value="1"/>
</dbReference>
<dbReference type="Gene3D" id="3.40.50.300">
    <property type="entry name" value="P-loop containing nucleotide triphosphate hydrolases"/>
    <property type="match status" value="1"/>
</dbReference>
<dbReference type="HAMAP" id="MF_00533">
    <property type="entry name" value="NifH"/>
    <property type="match status" value="1"/>
</dbReference>
<dbReference type="InterPro" id="IPR030655">
    <property type="entry name" value="NifH/chlL_CS"/>
</dbReference>
<dbReference type="InterPro" id="IPR000392">
    <property type="entry name" value="NifH/frxC"/>
</dbReference>
<dbReference type="InterPro" id="IPR005977">
    <property type="entry name" value="Nitrogenase_Fe_NifH"/>
</dbReference>
<dbReference type="InterPro" id="IPR027417">
    <property type="entry name" value="P-loop_NTPase"/>
</dbReference>
<dbReference type="NCBIfam" id="TIGR01287">
    <property type="entry name" value="nifH"/>
    <property type="match status" value="1"/>
</dbReference>
<dbReference type="PANTHER" id="PTHR42864">
    <property type="entry name" value="LIGHT-INDEPENDENT PROTOCHLOROPHYLLIDE REDUCTASE IRON-SULFUR ATP-BINDING PROTEIN"/>
    <property type="match status" value="1"/>
</dbReference>
<dbReference type="PANTHER" id="PTHR42864:SF2">
    <property type="entry name" value="LIGHT-INDEPENDENT PROTOCHLOROPHYLLIDE REDUCTASE IRON-SULFUR ATP-BINDING PROTEIN"/>
    <property type="match status" value="1"/>
</dbReference>
<dbReference type="Pfam" id="PF00142">
    <property type="entry name" value="Fer4_NifH"/>
    <property type="match status" value="1"/>
</dbReference>
<dbReference type="PIRSF" id="PIRSF000363">
    <property type="entry name" value="Nitrogenase_iron"/>
    <property type="match status" value="1"/>
</dbReference>
<dbReference type="PRINTS" id="PR00091">
    <property type="entry name" value="NITROGNASEII"/>
</dbReference>
<dbReference type="SUPFAM" id="SSF52540">
    <property type="entry name" value="P-loop containing nucleoside triphosphate hydrolases"/>
    <property type="match status" value="1"/>
</dbReference>
<dbReference type="PROSITE" id="PS00746">
    <property type="entry name" value="NIFH_FRXC_1"/>
    <property type="match status" value="1"/>
</dbReference>
<dbReference type="PROSITE" id="PS00692">
    <property type="entry name" value="NIFH_FRXC_2"/>
    <property type="match status" value="1"/>
</dbReference>
<dbReference type="PROSITE" id="PS51026">
    <property type="entry name" value="NIFH_FRXC_3"/>
    <property type="match status" value="1"/>
</dbReference>
<reference key="1">
    <citation type="journal article" date="2011" name="MBio">
        <title>Novel metabolic attributes of the genus Cyanothece, comprising a group of unicellular nitrogen-fixing Cyanobacteria.</title>
        <authorList>
            <person name="Bandyopadhyay A."/>
            <person name="Elvitigala T."/>
            <person name="Welsh E."/>
            <person name="Stockel J."/>
            <person name="Liberton M."/>
            <person name="Min H."/>
            <person name="Sherman L.A."/>
            <person name="Pakrasi H.B."/>
        </authorList>
    </citation>
    <scope>NUCLEOTIDE SEQUENCE [LARGE SCALE GENOMIC DNA]</scope>
    <source>
        <strain>PCC 7425 / ATCC 29141</strain>
    </source>
</reference>
<comment type="function">
    <text evidence="1">The key enzymatic reactions in nitrogen fixation are catalyzed by the nitrogenase complex, which has 2 components: the iron protein and the molybdenum-iron protein.</text>
</comment>
<comment type="catalytic activity">
    <reaction evidence="1">
        <text>N2 + 8 reduced [2Fe-2S]-[ferredoxin] + 16 ATP + 16 H2O = H2 + 8 oxidized [2Fe-2S]-[ferredoxin] + 2 NH4(+) + 16 ADP + 16 phosphate + 6 H(+)</text>
        <dbReference type="Rhea" id="RHEA:21448"/>
        <dbReference type="Rhea" id="RHEA-COMP:10000"/>
        <dbReference type="Rhea" id="RHEA-COMP:10001"/>
        <dbReference type="ChEBI" id="CHEBI:15377"/>
        <dbReference type="ChEBI" id="CHEBI:15378"/>
        <dbReference type="ChEBI" id="CHEBI:17997"/>
        <dbReference type="ChEBI" id="CHEBI:18276"/>
        <dbReference type="ChEBI" id="CHEBI:28938"/>
        <dbReference type="ChEBI" id="CHEBI:30616"/>
        <dbReference type="ChEBI" id="CHEBI:33737"/>
        <dbReference type="ChEBI" id="CHEBI:33738"/>
        <dbReference type="ChEBI" id="CHEBI:43474"/>
        <dbReference type="ChEBI" id="CHEBI:456216"/>
        <dbReference type="EC" id="1.18.6.1"/>
    </reaction>
</comment>
<comment type="cofactor">
    <cofactor evidence="1">
        <name>[4Fe-4S] cluster</name>
        <dbReference type="ChEBI" id="CHEBI:49883"/>
    </cofactor>
    <text evidence="1">Binds 1 [4Fe-4S] cluster per dimer.</text>
</comment>
<comment type="subunit">
    <text evidence="1">Homodimer.</text>
</comment>
<comment type="PTM">
    <text evidence="1">The reversible ADP-ribosylation of Arg-104 inactivates the nitrogenase reductase and regulates nitrogenase activity.</text>
</comment>
<comment type="similarity">
    <text evidence="1">Belongs to the NifH/BchL/ChlL family.</text>
</comment>
<keyword id="KW-0004">4Fe-4S</keyword>
<keyword id="KW-0013">ADP-ribosylation</keyword>
<keyword id="KW-0067">ATP-binding</keyword>
<keyword id="KW-0408">Iron</keyword>
<keyword id="KW-0411">Iron-sulfur</keyword>
<keyword id="KW-0479">Metal-binding</keyword>
<keyword id="KW-0535">Nitrogen fixation</keyword>
<keyword id="KW-0547">Nucleotide-binding</keyword>
<keyword id="KW-0560">Oxidoreductase</keyword>
<feature type="chain" id="PRO_1000211859" description="Nitrogenase iron protein">
    <location>
        <begin position="1"/>
        <end position="298"/>
    </location>
</feature>
<feature type="binding site" evidence="1">
    <location>
        <begin position="13"/>
        <end position="20"/>
    </location>
    <ligand>
        <name>ATP</name>
        <dbReference type="ChEBI" id="CHEBI:30616"/>
    </ligand>
</feature>
<feature type="binding site" evidence="1">
    <location>
        <position position="101"/>
    </location>
    <ligand>
        <name>[4Fe-4S] cluster</name>
        <dbReference type="ChEBI" id="CHEBI:49883"/>
        <note>ligand shared between dimeric partners</note>
    </ligand>
</feature>
<feature type="binding site" evidence="1">
    <location>
        <position position="135"/>
    </location>
    <ligand>
        <name>[4Fe-4S] cluster</name>
        <dbReference type="ChEBI" id="CHEBI:49883"/>
        <note>ligand shared between dimeric partners</note>
    </ligand>
</feature>
<feature type="modified residue" description="ADP-ribosylarginine; by dinitrogenase reductase ADP-ribosyltransferase" evidence="1">
    <location>
        <position position="104"/>
    </location>
</feature>
<proteinExistence type="inferred from homology"/>
<accession>B8HWE3</accession>